<feature type="chain" id="PRO_0000095537" description="Broad specificity amino-acid racemase YgeA">
    <location>
        <begin position="1"/>
        <end position="230"/>
    </location>
</feature>
<feature type="active site" description="Proton donor" evidence="1">
    <location>
        <position position="83"/>
    </location>
</feature>
<feature type="active site" description="Proton acceptor" evidence="1">
    <location>
        <position position="197"/>
    </location>
</feature>
<feature type="binding site" evidence="1">
    <location>
        <position position="10"/>
    </location>
    <ligand>
        <name>substrate</name>
    </ligand>
</feature>
<feature type="binding site" evidence="1">
    <location>
        <position position="52"/>
    </location>
    <ligand>
        <name>substrate</name>
    </ligand>
</feature>
<feature type="binding site" evidence="1">
    <location>
        <begin position="83"/>
        <end position="85"/>
    </location>
    <ligand>
        <name>substrate</name>
    </ligand>
</feature>
<feature type="binding site" evidence="1">
    <location>
        <begin position="198"/>
        <end position="199"/>
    </location>
    <ligand>
        <name>substrate</name>
    </ligand>
</feature>
<reference key="1">
    <citation type="journal article" date="1983" name="J. Mol. Biol.">
        <title>Regulation of diaminopimelate decarboxylase synthesis in Escherichia coli. III. Nucleotide sequence and regulation of the lysR gene.</title>
        <authorList>
            <person name="Stragier P."/>
            <person name="Patte J.-C."/>
        </authorList>
    </citation>
    <scope>NUCLEOTIDE SEQUENCE [GENOMIC DNA]</scope>
</reference>
<reference key="2">
    <citation type="journal article" date="1988" name="J. Biol. Chem.">
        <title>The cloning, DNA sequence, and overexpression of the gene araE coding for arabinose-proton symport in Escherichia coli K12.</title>
        <authorList>
            <person name="Maiden M.C.J."/>
            <person name="Jones-Mortimer M.C."/>
            <person name="Henderson P.J.F."/>
        </authorList>
    </citation>
    <scope>NUCLEOTIDE SEQUENCE [GENOMIC DNA]</scope>
    <source>
        <strain>K12 / JM2433</strain>
    </source>
</reference>
<reference key="3">
    <citation type="journal article" date="1997" name="Science">
        <title>The complete genome sequence of Escherichia coli K-12.</title>
        <authorList>
            <person name="Blattner F.R."/>
            <person name="Plunkett G. III"/>
            <person name="Bloch C.A."/>
            <person name="Perna N.T."/>
            <person name="Burland V."/>
            <person name="Riley M."/>
            <person name="Collado-Vides J."/>
            <person name="Glasner J.D."/>
            <person name="Rode C.K."/>
            <person name="Mayhew G.F."/>
            <person name="Gregor J."/>
            <person name="Davis N.W."/>
            <person name="Kirkpatrick H.A."/>
            <person name="Goeden M.A."/>
            <person name="Rose D.J."/>
            <person name="Mau B."/>
            <person name="Shao Y."/>
        </authorList>
    </citation>
    <scope>NUCLEOTIDE SEQUENCE [LARGE SCALE GENOMIC DNA]</scope>
    <source>
        <strain>K12 / MG1655 / ATCC 47076</strain>
    </source>
</reference>
<reference key="4">
    <citation type="journal article" date="2006" name="Mol. Syst. Biol.">
        <title>Highly accurate genome sequences of Escherichia coli K-12 strains MG1655 and W3110.</title>
        <authorList>
            <person name="Hayashi K."/>
            <person name="Morooka N."/>
            <person name="Yamamoto Y."/>
            <person name="Fujita K."/>
            <person name="Isono K."/>
            <person name="Choi S."/>
            <person name="Ohtsubo E."/>
            <person name="Baba T."/>
            <person name="Wanner B.L."/>
            <person name="Mori H."/>
            <person name="Horiuchi T."/>
        </authorList>
    </citation>
    <scope>NUCLEOTIDE SEQUENCE [LARGE SCALE GENOMIC DNA]</scope>
    <source>
        <strain>K12 / W3110 / ATCC 27325 / DSM 5911</strain>
    </source>
</reference>
<reference key="5">
    <citation type="journal article" date="2017" name="Amino Acids">
        <title>Identification and characterization of novel broad-spectrum amino acid racemases from Escherichia coli and Bacillus subtilis.</title>
        <authorList>
            <person name="Miyamoto T."/>
            <person name="Katane M."/>
            <person name="Saitoh Y."/>
            <person name="Sekine M."/>
            <person name="Homma H."/>
        </authorList>
    </citation>
    <scope>FUNCTION</scope>
    <scope>CATALYTIC ACTIVITY</scope>
    <scope>BIOPHYSICOCHEMICAL PROPERTIES</scope>
    <source>
        <strain>K12 / MG1655 / ATCC 47076</strain>
    </source>
</reference>
<dbReference type="EC" id="5.1.1.10" evidence="2"/>
<dbReference type="EMBL" id="J03732">
    <property type="protein sequence ID" value="AAA23470.1"/>
    <property type="molecule type" value="Genomic_DNA"/>
</dbReference>
<dbReference type="EMBL" id="J01614">
    <property type="protein sequence ID" value="AAA83863.1"/>
    <property type="molecule type" value="Genomic_DNA"/>
</dbReference>
<dbReference type="EMBL" id="U29581">
    <property type="protein sequence ID" value="AAB40487.1"/>
    <property type="molecule type" value="Genomic_DNA"/>
</dbReference>
<dbReference type="EMBL" id="U00096">
    <property type="protein sequence ID" value="AAC75879.1"/>
    <property type="molecule type" value="Genomic_DNA"/>
</dbReference>
<dbReference type="EMBL" id="AP009048">
    <property type="protein sequence ID" value="BAE76909.1"/>
    <property type="molecule type" value="Genomic_DNA"/>
</dbReference>
<dbReference type="PIR" id="A04438">
    <property type="entry name" value="QQECK"/>
</dbReference>
<dbReference type="RefSeq" id="NP_417317.1">
    <property type="nucleotide sequence ID" value="NC_000913.3"/>
</dbReference>
<dbReference type="RefSeq" id="WP_000848659.1">
    <property type="nucleotide sequence ID" value="NZ_LN832404.1"/>
</dbReference>
<dbReference type="SMR" id="P03813"/>
<dbReference type="BioGRID" id="4262310">
    <property type="interactions" value="17"/>
</dbReference>
<dbReference type="DIP" id="DIP-12147N"/>
<dbReference type="FunCoup" id="P03813">
    <property type="interactions" value="159"/>
</dbReference>
<dbReference type="IntAct" id="P03813">
    <property type="interactions" value="2"/>
</dbReference>
<dbReference type="STRING" id="511145.b2840"/>
<dbReference type="jPOST" id="P03813"/>
<dbReference type="PaxDb" id="511145-b2840"/>
<dbReference type="EnsemblBacteria" id="AAC75879">
    <property type="protein sequence ID" value="AAC75879"/>
    <property type="gene ID" value="b2840"/>
</dbReference>
<dbReference type="GeneID" id="947348"/>
<dbReference type="KEGG" id="ecj:JW2808"/>
<dbReference type="KEGG" id="eco:b2840"/>
<dbReference type="KEGG" id="ecoc:C3026_15595"/>
<dbReference type="PATRIC" id="fig|511145.12.peg.2938"/>
<dbReference type="EchoBASE" id="EB1146"/>
<dbReference type="eggNOG" id="COG1794">
    <property type="taxonomic scope" value="Bacteria"/>
</dbReference>
<dbReference type="HOGENOM" id="CLU_055360_1_0_6"/>
<dbReference type="InParanoid" id="P03813"/>
<dbReference type="OMA" id="YDTTAIH"/>
<dbReference type="OrthoDB" id="9803739at2"/>
<dbReference type="PhylomeDB" id="P03813"/>
<dbReference type="BioCyc" id="EcoCyc:EG11157-MONOMER"/>
<dbReference type="BioCyc" id="MetaCyc:EG11157-MONOMER"/>
<dbReference type="BRENDA" id="5.1.1.10">
    <property type="organism ID" value="2026"/>
</dbReference>
<dbReference type="SABIO-RK" id="P03813"/>
<dbReference type="PRO" id="PR:P03813"/>
<dbReference type="Proteomes" id="UP000000625">
    <property type="component" value="Chromosome"/>
</dbReference>
<dbReference type="GO" id="GO:0047661">
    <property type="term" value="F:amino-acid racemase activity"/>
    <property type="evidence" value="ECO:0000314"/>
    <property type="project" value="EcoCyc"/>
</dbReference>
<dbReference type="FunFam" id="3.40.50.1860:FF:000003">
    <property type="entry name" value="Aspartate racemase"/>
    <property type="match status" value="1"/>
</dbReference>
<dbReference type="FunFam" id="3.40.50.1860:FF:000004">
    <property type="entry name" value="Aspartate racemase"/>
    <property type="match status" value="1"/>
</dbReference>
<dbReference type="Gene3D" id="3.40.50.1860">
    <property type="match status" value="2"/>
</dbReference>
<dbReference type="InterPro" id="IPR015942">
    <property type="entry name" value="Asp/Glu/hydantoin_racemase"/>
</dbReference>
<dbReference type="InterPro" id="IPR001920">
    <property type="entry name" value="Asp/Glu_race"/>
</dbReference>
<dbReference type="InterPro" id="IPR018187">
    <property type="entry name" value="Asp/Glu_racemase_AS_1"/>
</dbReference>
<dbReference type="InterPro" id="IPR033134">
    <property type="entry name" value="Asp/Glu_racemase_AS_2"/>
</dbReference>
<dbReference type="InterPro" id="IPR004380">
    <property type="entry name" value="Asp_race"/>
</dbReference>
<dbReference type="NCBIfam" id="TIGR00035">
    <property type="entry name" value="asp_race"/>
    <property type="match status" value="1"/>
</dbReference>
<dbReference type="NCBIfam" id="NF007569">
    <property type="entry name" value="PRK10200.1"/>
    <property type="match status" value="1"/>
</dbReference>
<dbReference type="PANTHER" id="PTHR21198:SF7">
    <property type="entry name" value="ASPARTATE-GLUTAMATE RACEMASE FAMILY"/>
    <property type="match status" value="1"/>
</dbReference>
<dbReference type="PANTHER" id="PTHR21198">
    <property type="entry name" value="GLUTAMATE RACEMASE"/>
    <property type="match status" value="1"/>
</dbReference>
<dbReference type="Pfam" id="PF01177">
    <property type="entry name" value="Asp_Glu_race"/>
    <property type="match status" value="1"/>
</dbReference>
<dbReference type="SUPFAM" id="SSF53681">
    <property type="entry name" value="Aspartate/glutamate racemase"/>
    <property type="match status" value="2"/>
</dbReference>
<dbReference type="PROSITE" id="PS00923">
    <property type="entry name" value="ASP_GLU_RACEMASE_1"/>
    <property type="match status" value="1"/>
</dbReference>
<dbReference type="PROSITE" id="PS00924">
    <property type="entry name" value="ASP_GLU_RACEMASE_2"/>
    <property type="match status" value="1"/>
</dbReference>
<keyword id="KW-0413">Isomerase</keyword>
<keyword id="KW-1185">Reference proteome</keyword>
<comment type="function">
    <text evidence="2">Amino-acid racemase able to utilize a broad range of substrates. Highest activity is observed with L-homoserine and D-homoserine. Has tenfold lower activity against L-methionine, L-leucine, L-valine and L-histidine. Has low activity with L-norvaline, L-asparagine, D-methionine, L-aminobutyric acid, L-isoleucine, L-serine, L-norleucine, L-alanine, L-glutamine, LL-diaminopimelic acid and L-phenylalanine. Has no activity against ten L-amino acids (Thr, Glu, Asp, Arg, Lys, Tyr, Trp, Orn, Cit and Aad) (PubMed:28894939). D-amino acids might be used as components of peptidoglycan and/or be involved in peptidoglycan metabolism and remodeling (PubMed:28894939).</text>
</comment>
<comment type="catalytic activity">
    <reaction evidence="2">
        <text>an L-alpha-amino acid = a D-alpha-amino acid</text>
        <dbReference type="Rhea" id="RHEA:18317"/>
        <dbReference type="ChEBI" id="CHEBI:59869"/>
        <dbReference type="ChEBI" id="CHEBI:59871"/>
        <dbReference type="EC" id="5.1.1.10"/>
    </reaction>
</comment>
<comment type="catalytic activity">
    <reaction evidence="2">
        <text>L-homoserine = D-homoserine</text>
        <dbReference type="Rhea" id="RHEA:59404"/>
        <dbReference type="ChEBI" id="CHEBI:57476"/>
        <dbReference type="ChEBI" id="CHEBI:143081"/>
    </reaction>
</comment>
<comment type="biophysicochemical properties">
    <kinetics>
        <KM evidence="2">171 mM for L-homoserine</KM>
        <KM evidence="2">25.1 mM for D-homoserine</KM>
        <Vmax evidence="2">295.0 nmol/min/mg enzyme with L-homoserine as substrate</Vmax>
        <Vmax evidence="2">43.2 nmol/min/mg enzyme with D-homoserine as substrate</Vmax>
        <text evidence="2">kcat is 7.84 min(-1) with L-homoserine as substrate. kcat is 1.15 min(-1) with D-homoserine as substrate.</text>
    </kinetics>
    <phDependence>
        <text evidence="2">Optimum pH is 8.5 with L-homoserine as substrate.</text>
    </phDependence>
    <temperatureDependence>
        <text evidence="2">Optimum temperature is 37 degrees Celsius.</text>
    </temperatureDependence>
</comment>
<comment type="interaction">
    <interactant intactId="EBI-545190">
        <id>P03813</id>
    </interactant>
    <interactant intactId="EBI-545184">
        <id>P77788</id>
        <label>nudG</label>
    </interactant>
    <organismsDiffer>false</organismsDiffer>
    <experiments>2</experiments>
</comment>
<comment type="similarity">
    <text evidence="3">Belongs to the aspartate/glutamate racemases family.</text>
</comment>
<gene>
    <name type="primary">ygeA</name>
    <name type="ordered locus">b2840</name>
    <name type="ordered locus">JW2808</name>
</gene>
<sequence length="230" mass="25248">MKTIGLLGGMSWESTIPYYRLINEGIKQRLGGLHSAQVLLHSVDFHEIEECQRRGEWDKTGDILAEAALGLQRAGAEGIVLCTNTMHKVADAIESRCTLPFLHIADATGRAITGAGMTRVALLGTRYTMEQDFYRGRLTEQFSINCLIPEADERAKINQIIFEELCLGQFTEASRAYCAQVIARLAEQGAQGVIFGCTEIGLLVPEERSVLPVFDTAAIHAEDAVAFMLS</sequence>
<protein>
    <recommendedName>
        <fullName evidence="3">Broad specificity amino-acid racemase YgeA</fullName>
        <ecNumber evidence="2">5.1.1.10</ecNumber>
    </recommendedName>
</protein>
<evidence type="ECO:0000250" key="1">
    <source>
        <dbReference type="UniProtKB" id="A0A140N890"/>
    </source>
</evidence>
<evidence type="ECO:0000269" key="2">
    <source>
    </source>
</evidence>
<evidence type="ECO:0000305" key="3"/>
<organism>
    <name type="scientific">Escherichia coli (strain K12)</name>
    <dbReference type="NCBI Taxonomy" id="83333"/>
    <lineage>
        <taxon>Bacteria</taxon>
        <taxon>Pseudomonadati</taxon>
        <taxon>Pseudomonadota</taxon>
        <taxon>Gammaproteobacteria</taxon>
        <taxon>Enterobacterales</taxon>
        <taxon>Enterobacteriaceae</taxon>
        <taxon>Escherichia</taxon>
    </lineage>
</organism>
<name>YGEA_ECOLI</name>
<accession>P03813</accession>
<accession>Q2M9Z7</accession>
<proteinExistence type="evidence at protein level"/>